<name>RNFB_MAGMM</name>
<comment type="function">
    <text evidence="1">Part of a membrane-bound complex that couples electron transfer with translocation of ions across the membrane.</text>
</comment>
<comment type="cofactor">
    <cofactor evidence="1">
        <name>[4Fe-4S] cluster</name>
        <dbReference type="ChEBI" id="CHEBI:49883"/>
    </cofactor>
    <text evidence="1">Binds 3 [4Fe-4S] clusters.</text>
</comment>
<comment type="subunit">
    <text evidence="1">The complex is composed of six subunits: RnfA, RnfB, RnfC, RnfD, RnfE and RnfG.</text>
</comment>
<comment type="subcellular location">
    <subcellularLocation>
        <location evidence="1">Cell inner membrane</location>
    </subcellularLocation>
</comment>
<comment type="similarity">
    <text evidence="1">Belongs to the 4Fe4S bacterial-type ferredoxin family. RnfB subfamily.</text>
</comment>
<protein>
    <recommendedName>
        <fullName evidence="1">Ion-translocating oxidoreductase complex subunit B</fullName>
        <ecNumber evidence="1">7.-.-.-</ecNumber>
    </recommendedName>
    <alternativeName>
        <fullName evidence="1">Rnf electron transport complex subunit B</fullName>
    </alternativeName>
</protein>
<proteinExistence type="inferred from homology"/>
<gene>
    <name evidence="1" type="primary">rnfB</name>
    <name type="ordered locus">Mmc1_0689</name>
</gene>
<keyword id="KW-0004">4Fe-4S</keyword>
<keyword id="KW-0997">Cell inner membrane</keyword>
<keyword id="KW-1003">Cell membrane</keyword>
<keyword id="KW-0249">Electron transport</keyword>
<keyword id="KW-0408">Iron</keyword>
<keyword id="KW-0411">Iron-sulfur</keyword>
<keyword id="KW-0472">Membrane</keyword>
<keyword id="KW-0479">Metal-binding</keyword>
<keyword id="KW-1185">Reference proteome</keyword>
<keyword id="KW-0677">Repeat</keyword>
<keyword id="KW-1278">Translocase</keyword>
<keyword id="KW-0813">Transport</keyword>
<reference key="1">
    <citation type="journal article" date="2009" name="Appl. Environ. Microbiol.">
        <title>Complete genome sequence of the chemolithoautotrophic marine magnetotactic coccus strain MC-1.</title>
        <authorList>
            <person name="Schubbe S."/>
            <person name="Williams T.J."/>
            <person name="Xie G."/>
            <person name="Kiss H.E."/>
            <person name="Brettin T.S."/>
            <person name="Martinez D."/>
            <person name="Ross C.A."/>
            <person name="Schuler D."/>
            <person name="Cox B.L."/>
            <person name="Nealson K.H."/>
            <person name="Bazylinski D.A."/>
        </authorList>
    </citation>
    <scope>NUCLEOTIDE SEQUENCE [LARGE SCALE GENOMIC DNA]</scope>
    <source>
        <strain>ATCC BAA-1437 / JCM 17883 / MC-1</strain>
    </source>
</reference>
<accession>A0L5G7</accession>
<feature type="chain" id="PRO_1000194487" description="Ion-translocating oxidoreductase complex subunit B">
    <location>
        <begin position="1"/>
        <end position="181"/>
    </location>
</feature>
<feature type="domain" description="4Fe-4S" evidence="1">
    <location>
        <begin position="32"/>
        <end position="90"/>
    </location>
</feature>
<feature type="domain" description="4Fe-4S ferredoxin-type 1" evidence="1">
    <location>
        <begin position="101"/>
        <end position="130"/>
    </location>
</feature>
<feature type="domain" description="4Fe-4S ferredoxin-type 2" evidence="1">
    <location>
        <begin position="131"/>
        <end position="160"/>
    </location>
</feature>
<feature type="region of interest" description="Hydrophobic" evidence="1">
    <location>
        <begin position="1"/>
        <end position="26"/>
    </location>
</feature>
<feature type="binding site" evidence="1">
    <location>
        <position position="49"/>
    </location>
    <ligand>
        <name>[4Fe-4S] cluster</name>
        <dbReference type="ChEBI" id="CHEBI:49883"/>
        <label>1</label>
    </ligand>
</feature>
<feature type="binding site" evidence="1">
    <location>
        <position position="52"/>
    </location>
    <ligand>
        <name>[4Fe-4S] cluster</name>
        <dbReference type="ChEBI" id="CHEBI:49883"/>
        <label>1</label>
    </ligand>
</feature>
<feature type="binding site" evidence="1">
    <location>
        <position position="57"/>
    </location>
    <ligand>
        <name>[4Fe-4S] cluster</name>
        <dbReference type="ChEBI" id="CHEBI:49883"/>
        <label>1</label>
    </ligand>
</feature>
<feature type="binding site" evidence="1">
    <location>
        <position position="73"/>
    </location>
    <ligand>
        <name>[4Fe-4S] cluster</name>
        <dbReference type="ChEBI" id="CHEBI:49883"/>
        <label>1</label>
    </ligand>
</feature>
<feature type="binding site" evidence="1">
    <location>
        <position position="110"/>
    </location>
    <ligand>
        <name>[4Fe-4S] cluster</name>
        <dbReference type="ChEBI" id="CHEBI:49883"/>
        <label>2</label>
    </ligand>
</feature>
<feature type="binding site" evidence="1">
    <location>
        <position position="113"/>
    </location>
    <ligand>
        <name>[4Fe-4S] cluster</name>
        <dbReference type="ChEBI" id="CHEBI:49883"/>
        <label>2</label>
    </ligand>
</feature>
<feature type="binding site" evidence="1">
    <location>
        <position position="116"/>
    </location>
    <ligand>
        <name>[4Fe-4S] cluster</name>
        <dbReference type="ChEBI" id="CHEBI:49883"/>
        <label>2</label>
    </ligand>
</feature>
<feature type="binding site" evidence="1">
    <location>
        <position position="120"/>
    </location>
    <ligand>
        <name>[4Fe-4S] cluster</name>
        <dbReference type="ChEBI" id="CHEBI:49883"/>
        <label>3</label>
    </ligand>
</feature>
<feature type="binding site" evidence="1">
    <location>
        <position position="140"/>
    </location>
    <ligand>
        <name>[4Fe-4S] cluster</name>
        <dbReference type="ChEBI" id="CHEBI:49883"/>
        <label>3</label>
    </ligand>
</feature>
<feature type="binding site" evidence="1">
    <location>
        <position position="143"/>
    </location>
    <ligand>
        <name>[4Fe-4S] cluster</name>
        <dbReference type="ChEBI" id="CHEBI:49883"/>
        <label>3</label>
    </ligand>
</feature>
<feature type="binding site" evidence="1">
    <location>
        <position position="146"/>
    </location>
    <ligand>
        <name>[4Fe-4S] cluster</name>
        <dbReference type="ChEBI" id="CHEBI:49883"/>
        <label>3</label>
    </ligand>
</feature>
<feature type="binding site" evidence="1">
    <location>
        <position position="150"/>
    </location>
    <ligand>
        <name>[4Fe-4S] cluster</name>
        <dbReference type="ChEBI" id="CHEBI:49883"/>
        <label>2</label>
    </ligand>
</feature>
<organism>
    <name type="scientific">Magnetococcus marinus (strain ATCC BAA-1437 / JCM 17883 / MC-1)</name>
    <dbReference type="NCBI Taxonomy" id="156889"/>
    <lineage>
        <taxon>Bacteria</taxon>
        <taxon>Pseudomonadati</taxon>
        <taxon>Pseudomonadota</taxon>
        <taxon>Alphaproteobacteria</taxon>
        <taxon>Magnetococcales</taxon>
        <taxon>Magnetococcaceae</taxon>
        <taxon>Magnetococcus</taxon>
    </lineage>
</organism>
<sequence length="181" mass="18729">MLEAVSAVMSLGGMALFAGLGLGYAAKKFHVEADPVVEKLEALLPATNCGMCGHPGCGPYAQAITEGEAINLCTPGGKAVMESIAAMLGVSPAAMDDEGPKVAYIDEEACIGCTACIKVCPVDAIVGANKQSHTVIVAECTSCQLCLEPCPTDCITMQPVPENIYDWTWDKPAGPNSKALH</sequence>
<evidence type="ECO:0000255" key="1">
    <source>
        <dbReference type="HAMAP-Rule" id="MF_00463"/>
    </source>
</evidence>
<dbReference type="EC" id="7.-.-.-" evidence="1"/>
<dbReference type="EMBL" id="CP000471">
    <property type="protein sequence ID" value="ABK43210.1"/>
    <property type="molecule type" value="Genomic_DNA"/>
</dbReference>
<dbReference type="RefSeq" id="WP_011712370.1">
    <property type="nucleotide sequence ID" value="NC_008576.1"/>
</dbReference>
<dbReference type="STRING" id="156889.Mmc1_0689"/>
<dbReference type="KEGG" id="mgm:Mmc1_0689"/>
<dbReference type="eggNOG" id="COG2878">
    <property type="taxonomic scope" value="Bacteria"/>
</dbReference>
<dbReference type="HOGENOM" id="CLU_063448_2_0_5"/>
<dbReference type="OrthoDB" id="9800445at2"/>
<dbReference type="Proteomes" id="UP000002586">
    <property type="component" value="Chromosome"/>
</dbReference>
<dbReference type="GO" id="GO:0005886">
    <property type="term" value="C:plasma membrane"/>
    <property type="evidence" value="ECO:0007669"/>
    <property type="project" value="UniProtKB-SubCell"/>
</dbReference>
<dbReference type="GO" id="GO:0051539">
    <property type="term" value="F:4 iron, 4 sulfur cluster binding"/>
    <property type="evidence" value="ECO:0007669"/>
    <property type="project" value="UniProtKB-UniRule"/>
</dbReference>
<dbReference type="GO" id="GO:0009055">
    <property type="term" value="F:electron transfer activity"/>
    <property type="evidence" value="ECO:0007669"/>
    <property type="project" value="InterPro"/>
</dbReference>
<dbReference type="GO" id="GO:0046872">
    <property type="term" value="F:metal ion binding"/>
    <property type="evidence" value="ECO:0007669"/>
    <property type="project" value="UniProtKB-KW"/>
</dbReference>
<dbReference type="GO" id="GO:0022900">
    <property type="term" value="P:electron transport chain"/>
    <property type="evidence" value="ECO:0007669"/>
    <property type="project" value="UniProtKB-UniRule"/>
</dbReference>
<dbReference type="Gene3D" id="3.30.70.20">
    <property type="match status" value="1"/>
</dbReference>
<dbReference type="Gene3D" id="1.10.15.40">
    <property type="entry name" value="Electron transport complex subunit B, putative Fe-S cluster"/>
    <property type="match status" value="1"/>
</dbReference>
<dbReference type="HAMAP" id="MF_00463">
    <property type="entry name" value="RsxB_RnfB"/>
    <property type="match status" value="1"/>
</dbReference>
<dbReference type="InterPro" id="IPR007202">
    <property type="entry name" value="4Fe-4S_dom"/>
</dbReference>
<dbReference type="InterPro" id="IPR017896">
    <property type="entry name" value="4Fe4S_Fe-S-bd"/>
</dbReference>
<dbReference type="InterPro" id="IPR017900">
    <property type="entry name" value="4Fe4S_Fe_S_CS"/>
</dbReference>
<dbReference type="InterPro" id="IPR010207">
    <property type="entry name" value="Elect_transpt_cplx_RnfB/RsxB"/>
</dbReference>
<dbReference type="InterPro" id="IPR016463">
    <property type="entry name" value="RnfB/RsxB_Proteobac"/>
</dbReference>
<dbReference type="InterPro" id="IPR050294">
    <property type="entry name" value="RnfB_subfamily"/>
</dbReference>
<dbReference type="NCBIfam" id="NF003475">
    <property type="entry name" value="PRK05113.1"/>
    <property type="match status" value="1"/>
</dbReference>
<dbReference type="NCBIfam" id="TIGR01944">
    <property type="entry name" value="rnfB"/>
    <property type="match status" value="1"/>
</dbReference>
<dbReference type="PANTHER" id="PTHR42859:SF3">
    <property type="entry name" value="ION-TRANSLOCATING OXIDOREDUCTASE COMPLEX SUBUNIT B"/>
    <property type="match status" value="1"/>
</dbReference>
<dbReference type="PANTHER" id="PTHR42859">
    <property type="entry name" value="OXIDOREDUCTASE"/>
    <property type="match status" value="1"/>
</dbReference>
<dbReference type="Pfam" id="PF14697">
    <property type="entry name" value="Fer4_21"/>
    <property type="match status" value="1"/>
</dbReference>
<dbReference type="Pfam" id="PF04060">
    <property type="entry name" value="FeS"/>
    <property type="match status" value="1"/>
</dbReference>
<dbReference type="PIRSF" id="PIRSF005784">
    <property type="entry name" value="Elect_transpt_RnfB"/>
    <property type="match status" value="1"/>
</dbReference>
<dbReference type="SUPFAM" id="SSF54862">
    <property type="entry name" value="4Fe-4S ferredoxins"/>
    <property type="match status" value="1"/>
</dbReference>
<dbReference type="PROSITE" id="PS51656">
    <property type="entry name" value="4FE4S"/>
    <property type="match status" value="1"/>
</dbReference>
<dbReference type="PROSITE" id="PS00198">
    <property type="entry name" value="4FE4S_FER_1"/>
    <property type="match status" value="2"/>
</dbReference>
<dbReference type="PROSITE" id="PS51379">
    <property type="entry name" value="4FE4S_FER_2"/>
    <property type="match status" value="2"/>
</dbReference>